<proteinExistence type="inferred from homology"/>
<feature type="chain" id="PRO_1000142775" description="Large ribosomal subunit protein uL15">
    <location>
        <begin position="1"/>
        <end position="146"/>
    </location>
</feature>
<feature type="region of interest" description="Disordered" evidence="2">
    <location>
        <begin position="1"/>
        <end position="52"/>
    </location>
</feature>
<feature type="compositionally biased region" description="Basic and acidic residues" evidence="2">
    <location>
        <begin position="1"/>
        <end position="13"/>
    </location>
</feature>
<feature type="compositionally biased region" description="Gly residues" evidence="2">
    <location>
        <begin position="21"/>
        <end position="31"/>
    </location>
</feature>
<feature type="compositionally biased region" description="Gly residues" evidence="2">
    <location>
        <begin position="42"/>
        <end position="52"/>
    </location>
</feature>
<organism>
    <name type="scientific">Bacillus cereus (strain AH187)</name>
    <dbReference type="NCBI Taxonomy" id="405534"/>
    <lineage>
        <taxon>Bacteria</taxon>
        <taxon>Bacillati</taxon>
        <taxon>Bacillota</taxon>
        <taxon>Bacilli</taxon>
        <taxon>Bacillales</taxon>
        <taxon>Bacillaceae</taxon>
        <taxon>Bacillus</taxon>
        <taxon>Bacillus cereus group</taxon>
    </lineage>
</organism>
<reference key="1">
    <citation type="submission" date="2008-10" db="EMBL/GenBank/DDBJ databases">
        <title>Genome sequence of Bacillus cereus AH187.</title>
        <authorList>
            <person name="Dodson R.J."/>
            <person name="Durkin A.S."/>
            <person name="Rosovitz M.J."/>
            <person name="Rasko D.A."/>
            <person name="Kolsto A.B."/>
            <person name="Okstad O.A."/>
            <person name="Ravel J."/>
            <person name="Sutton G."/>
        </authorList>
    </citation>
    <scope>NUCLEOTIDE SEQUENCE [LARGE SCALE GENOMIC DNA]</scope>
    <source>
        <strain>AH187</strain>
    </source>
</reference>
<comment type="function">
    <text evidence="1">Binds to the 23S rRNA.</text>
</comment>
<comment type="subunit">
    <text evidence="1">Part of the 50S ribosomal subunit.</text>
</comment>
<comment type="similarity">
    <text evidence="1">Belongs to the universal ribosomal protein uL15 family.</text>
</comment>
<protein>
    <recommendedName>
        <fullName evidence="1">Large ribosomal subunit protein uL15</fullName>
    </recommendedName>
    <alternativeName>
        <fullName evidence="3">50S ribosomal protein L15</fullName>
    </alternativeName>
</protein>
<gene>
    <name evidence="1" type="primary">rplO</name>
    <name type="ordered locus">BCAH187_A0160</name>
</gene>
<name>RL15_BACC7</name>
<dbReference type="EMBL" id="CP001177">
    <property type="protein sequence ID" value="ACJ80711.1"/>
    <property type="molecule type" value="Genomic_DNA"/>
</dbReference>
<dbReference type="SMR" id="B7HQW3"/>
<dbReference type="KEGG" id="bcr:BCAH187_A0160"/>
<dbReference type="HOGENOM" id="CLU_055188_4_2_9"/>
<dbReference type="Proteomes" id="UP000002214">
    <property type="component" value="Chromosome"/>
</dbReference>
<dbReference type="GO" id="GO:0022625">
    <property type="term" value="C:cytosolic large ribosomal subunit"/>
    <property type="evidence" value="ECO:0007669"/>
    <property type="project" value="TreeGrafter"/>
</dbReference>
<dbReference type="GO" id="GO:0019843">
    <property type="term" value="F:rRNA binding"/>
    <property type="evidence" value="ECO:0007669"/>
    <property type="project" value="UniProtKB-UniRule"/>
</dbReference>
<dbReference type="GO" id="GO:0003735">
    <property type="term" value="F:structural constituent of ribosome"/>
    <property type="evidence" value="ECO:0007669"/>
    <property type="project" value="InterPro"/>
</dbReference>
<dbReference type="GO" id="GO:0006412">
    <property type="term" value="P:translation"/>
    <property type="evidence" value="ECO:0007669"/>
    <property type="project" value="UniProtKB-UniRule"/>
</dbReference>
<dbReference type="FunFam" id="3.100.10.10:FF:000004">
    <property type="entry name" value="50S ribosomal protein L15"/>
    <property type="match status" value="1"/>
</dbReference>
<dbReference type="Gene3D" id="3.100.10.10">
    <property type="match status" value="1"/>
</dbReference>
<dbReference type="HAMAP" id="MF_01341">
    <property type="entry name" value="Ribosomal_uL15"/>
    <property type="match status" value="1"/>
</dbReference>
<dbReference type="InterPro" id="IPR030878">
    <property type="entry name" value="Ribosomal_uL15"/>
</dbReference>
<dbReference type="InterPro" id="IPR021131">
    <property type="entry name" value="Ribosomal_uL15/eL18"/>
</dbReference>
<dbReference type="InterPro" id="IPR036227">
    <property type="entry name" value="Ribosomal_uL15/eL18_sf"/>
</dbReference>
<dbReference type="InterPro" id="IPR005749">
    <property type="entry name" value="Ribosomal_uL15_bac-type"/>
</dbReference>
<dbReference type="InterPro" id="IPR001196">
    <property type="entry name" value="Ribosomal_uL15_CS"/>
</dbReference>
<dbReference type="NCBIfam" id="TIGR01071">
    <property type="entry name" value="rplO_bact"/>
    <property type="match status" value="1"/>
</dbReference>
<dbReference type="PANTHER" id="PTHR12934">
    <property type="entry name" value="50S RIBOSOMAL PROTEIN L15"/>
    <property type="match status" value="1"/>
</dbReference>
<dbReference type="PANTHER" id="PTHR12934:SF11">
    <property type="entry name" value="LARGE RIBOSOMAL SUBUNIT PROTEIN UL15M"/>
    <property type="match status" value="1"/>
</dbReference>
<dbReference type="Pfam" id="PF00828">
    <property type="entry name" value="Ribosomal_L27A"/>
    <property type="match status" value="1"/>
</dbReference>
<dbReference type="SUPFAM" id="SSF52080">
    <property type="entry name" value="Ribosomal proteins L15p and L18e"/>
    <property type="match status" value="1"/>
</dbReference>
<dbReference type="PROSITE" id="PS00475">
    <property type="entry name" value="RIBOSOMAL_L15"/>
    <property type="match status" value="1"/>
</dbReference>
<evidence type="ECO:0000255" key="1">
    <source>
        <dbReference type="HAMAP-Rule" id="MF_01341"/>
    </source>
</evidence>
<evidence type="ECO:0000256" key="2">
    <source>
        <dbReference type="SAM" id="MobiDB-lite"/>
    </source>
</evidence>
<evidence type="ECO:0000305" key="3"/>
<sequence length="146" mass="15492">MKLHELKPAEGSRKVRNRVGRGIGSGNGKTAGKGHKGQNARSGGGVRLGFEGGQTPLFRRLPKRGFTNINRKEFAIVNLSTLNRFEDGTEVTPELLLETGVISKLNDGVKILASGAVEKKLTVKAHKFSSSAKEAIEAAGGSVEVI</sequence>
<accession>B7HQW3</accession>
<keyword id="KW-0687">Ribonucleoprotein</keyword>
<keyword id="KW-0689">Ribosomal protein</keyword>
<keyword id="KW-0694">RNA-binding</keyword>
<keyword id="KW-0699">rRNA-binding</keyword>